<proteinExistence type="evidence at protein level"/>
<name>THTR_AZOVI</name>
<feature type="chain" id="PRO_0000139406" description="Thiosulfate sulfurtransferase">
    <location>
        <begin position="1"/>
        <end position="271"/>
    </location>
</feature>
<feature type="domain" description="Rhodanese 1" evidence="2">
    <location>
        <begin position="21"/>
        <end position="129"/>
    </location>
</feature>
<feature type="domain" description="Rhodanese 2" evidence="2">
    <location>
        <begin position="159"/>
        <end position="270"/>
    </location>
</feature>
<feature type="active site" description="Cysteine persulfide intermediate">
    <location>
        <position position="230"/>
    </location>
</feature>
<feature type="binding site">
    <location>
        <position position="235"/>
    </location>
    <ligand>
        <name>substrate</name>
    </ligand>
</feature>
<feature type="helix" evidence="3">
    <location>
        <begin position="2"/>
        <end position="4"/>
    </location>
</feature>
<feature type="strand" evidence="3">
    <location>
        <begin position="9"/>
        <end position="11"/>
    </location>
</feature>
<feature type="helix" evidence="3">
    <location>
        <begin position="13"/>
        <end position="17"/>
    </location>
</feature>
<feature type="turn" evidence="3">
    <location>
        <begin position="18"/>
        <end position="21"/>
    </location>
</feature>
<feature type="strand" evidence="3">
    <location>
        <begin position="25"/>
        <end position="29"/>
    </location>
</feature>
<feature type="helix" evidence="3">
    <location>
        <begin position="33"/>
        <end position="38"/>
    </location>
</feature>
<feature type="helix" evidence="3">
    <location>
        <begin position="49"/>
        <end position="52"/>
    </location>
</feature>
<feature type="helix" evidence="3">
    <location>
        <begin position="66"/>
        <end position="76"/>
    </location>
</feature>
<feature type="strand" evidence="3">
    <location>
        <begin position="83"/>
        <end position="87"/>
    </location>
</feature>
<feature type="strand" evidence="3">
    <location>
        <begin position="89"/>
        <end position="92"/>
    </location>
</feature>
<feature type="helix" evidence="3">
    <location>
        <begin position="93"/>
        <end position="104"/>
    </location>
</feature>
<feature type="strand" evidence="3">
    <location>
        <begin position="110"/>
        <end position="113"/>
    </location>
</feature>
<feature type="helix" evidence="3">
    <location>
        <begin position="116"/>
        <end position="122"/>
    </location>
</feature>
<feature type="helix" evidence="3">
    <location>
        <begin position="151"/>
        <end position="157"/>
    </location>
</feature>
<feature type="strand" evidence="3">
    <location>
        <begin position="163"/>
        <end position="167"/>
    </location>
</feature>
<feature type="helix" evidence="3">
    <location>
        <begin position="171"/>
        <end position="174"/>
    </location>
</feature>
<feature type="strand" evidence="3">
    <location>
        <begin position="181"/>
        <end position="183"/>
    </location>
</feature>
<feature type="helix" evidence="3">
    <location>
        <begin position="195"/>
        <end position="198"/>
    </location>
</feature>
<feature type="helix" evidence="3">
    <location>
        <begin position="201"/>
        <end position="203"/>
    </location>
</feature>
<feature type="helix" evidence="3">
    <location>
        <begin position="211"/>
        <end position="217"/>
    </location>
</feature>
<feature type="strand" evidence="3">
    <location>
        <begin position="224"/>
        <end position="229"/>
    </location>
</feature>
<feature type="strand" evidence="3">
    <location>
        <begin position="231"/>
        <end position="234"/>
    </location>
</feature>
<feature type="helix" evidence="3">
    <location>
        <begin position="235"/>
        <end position="245"/>
    </location>
</feature>
<feature type="strand" evidence="3">
    <location>
        <begin position="251"/>
        <end position="253"/>
    </location>
</feature>
<feature type="helix" evidence="3">
    <location>
        <begin position="257"/>
        <end position="261"/>
    </location>
</feature>
<evidence type="ECO:0000250" key="1"/>
<evidence type="ECO:0000255" key="2">
    <source>
        <dbReference type="PROSITE-ProRule" id="PRU00173"/>
    </source>
</evidence>
<evidence type="ECO:0007829" key="3">
    <source>
        <dbReference type="PDB" id="1E0C"/>
    </source>
</evidence>
<dbReference type="EC" id="2.8.1.1"/>
<dbReference type="EMBL" id="L42346">
    <property type="protein sequence ID" value="AAB03239.1"/>
    <property type="molecule type" value="Genomic_DNA"/>
</dbReference>
<dbReference type="PIR" id="S62187">
    <property type="entry name" value="S62187"/>
</dbReference>
<dbReference type="RefSeq" id="WP_012699416.1">
    <property type="nucleotide sequence ID" value="NZ_FPKM01000008.1"/>
</dbReference>
<dbReference type="PDB" id="1E0C">
    <property type="method" value="X-ray"/>
    <property type="resolution" value="1.80 A"/>
    <property type="chains" value="A=1-271"/>
</dbReference>
<dbReference type="PDB" id="1H4K">
    <property type="method" value="X-ray"/>
    <property type="resolution" value="2.05 A"/>
    <property type="chains" value="X=1-271"/>
</dbReference>
<dbReference type="PDB" id="1H4M">
    <property type="method" value="X-ray"/>
    <property type="resolution" value="2.10 A"/>
    <property type="chains" value="X=1-271"/>
</dbReference>
<dbReference type="PDBsum" id="1E0C"/>
<dbReference type="PDBsum" id="1H4K"/>
<dbReference type="PDBsum" id="1H4M"/>
<dbReference type="BMRB" id="P52197"/>
<dbReference type="SMR" id="P52197"/>
<dbReference type="IntAct" id="P52197">
    <property type="interactions" value="1"/>
</dbReference>
<dbReference type="MINT" id="P52197"/>
<dbReference type="DrugBank" id="DB04053">
    <property type="generic name" value="Hypophosphite"/>
</dbReference>
<dbReference type="OMA" id="YPRVKGY"/>
<dbReference type="BioCyc" id="MetaCyc:MONOMER-12548"/>
<dbReference type="BRENDA" id="2.8.1.1">
    <property type="organism ID" value="49"/>
</dbReference>
<dbReference type="EvolutionaryTrace" id="P52197"/>
<dbReference type="GO" id="GO:0005737">
    <property type="term" value="C:cytoplasm"/>
    <property type="evidence" value="ECO:0007669"/>
    <property type="project" value="UniProtKB-SubCell"/>
</dbReference>
<dbReference type="GO" id="GO:0004792">
    <property type="term" value="F:thiosulfate-cyanide sulfurtransferase activity"/>
    <property type="evidence" value="ECO:0007669"/>
    <property type="project" value="UniProtKB-EC"/>
</dbReference>
<dbReference type="CDD" id="cd01448">
    <property type="entry name" value="TST_Repeat_1"/>
    <property type="match status" value="1"/>
</dbReference>
<dbReference type="CDD" id="cd01449">
    <property type="entry name" value="TST_Repeat_2"/>
    <property type="match status" value="1"/>
</dbReference>
<dbReference type="Gene3D" id="3.40.250.10">
    <property type="entry name" value="Rhodanese-like domain"/>
    <property type="match status" value="2"/>
</dbReference>
<dbReference type="InterPro" id="IPR001763">
    <property type="entry name" value="Rhodanese-like_dom"/>
</dbReference>
<dbReference type="InterPro" id="IPR036873">
    <property type="entry name" value="Rhodanese-like_dom_sf"/>
</dbReference>
<dbReference type="InterPro" id="IPR051126">
    <property type="entry name" value="Thiosulfate_sulfurtransferase"/>
</dbReference>
<dbReference type="InterPro" id="IPR001307">
    <property type="entry name" value="Thiosulphate_STrfase_CS"/>
</dbReference>
<dbReference type="PANTHER" id="PTHR43855">
    <property type="entry name" value="THIOSULFATE SULFURTRANSFERASE"/>
    <property type="match status" value="1"/>
</dbReference>
<dbReference type="PANTHER" id="PTHR43855:SF1">
    <property type="entry name" value="THIOSULFATE SULFURTRANSFERASE"/>
    <property type="match status" value="1"/>
</dbReference>
<dbReference type="Pfam" id="PF00581">
    <property type="entry name" value="Rhodanese"/>
    <property type="match status" value="2"/>
</dbReference>
<dbReference type="SMART" id="SM00450">
    <property type="entry name" value="RHOD"/>
    <property type="match status" value="2"/>
</dbReference>
<dbReference type="SUPFAM" id="SSF52821">
    <property type="entry name" value="Rhodanese/Cell cycle control phosphatase"/>
    <property type="match status" value="2"/>
</dbReference>
<dbReference type="PROSITE" id="PS00380">
    <property type="entry name" value="RHODANESE_1"/>
    <property type="match status" value="1"/>
</dbReference>
<dbReference type="PROSITE" id="PS00683">
    <property type="entry name" value="RHODANESE_2"/>
    <property type="match status" value="1"/>
</dbReference>
<dbReference type="PROSITE" id="PS50206">
    <property type="entry name" value="RHODANESE_3"/>
    <property type="match status" value="2"/>
</dbReference>
<sequence length="271" mass="29629">MDDFASLPLVIEPADLQARLSAPELILVDLTSAARYAEGHIPGARFVDPKRTQLGQPPAPGLQPPREQLESLFGELGHRPEAVYVVYDDEGGGWAGRFIWLLDVIGQQRYHYLNGGLTAWLAEDRPLSRELPAPAGGPVALSLHDEPTASRDYLLGRLGAADLAIWDARSPQEYRGEKVLAAKGGHIPGAVNFEWTAAMDPSRALRIRTDIAGRLEELGITPDKEIVTHCQTHHRSGLTYLIAKALGYPRVKGYAGSWGEWGNHPDTPVEL</sequence>
<keyword id="KW-0002">3D-structure</keyword>
<keyword id="KW-0963">Cytoplasm</keyword>
<keyword id="KW-0903">Direct protein sequencing</keyword>
<keyword id="KW-0677">Repeat</keyword>
<keyword id="KW-0808">Transferase</keyword>
<comment type="catalytic activity">
    <reaction>
        <text>thiosulfate + hydrogen cyanide = thiocyanate + sulfite + 2 H(+)</text>
        <dbReference type="Rhea" id="RHEA:16881"/>
        <dbReference type="ChEBI" id="CHEBI:15378"/>
        <dbReference type="ChEBI" id="CHEBI:17359"/>
        <dbReference type="ChEBI" id="CHEBI:18022"/>
        <dbReference type="ChEBI" id="CHEBI:18407"/>
        <dbReference type="ChEBI" id="CHEBI:33542"/>
        <dbReference type="EC" id="2.8.1.1"/>
    </reaction>
</comment>
<comment type="interaction">
    <interactant intactId="EBI-7906952">
        <id>P52197</id>
    </interactant>
    <interactant intactId="EBI-550055">
        <id>P0A6B7</id>
        <label>iscS</label>
    </interactant>
    <organismsDiffer>true</organismsDiffer>
    <experiments>2</experiments>
</comment>
<comment type="subcellular location">
    <subcellularLocation>
        <location>Cytoplasm</location>
    </subcellularLocation>
</comment>
<comment type="domain">
    <text evidence="1">Contains two rhodanese domains with different primary structures but with near identical secondary structure conformations suggesting a common evolutionary origin. Only the C-terminal rhodanese domain contains the catalytic cysteine residue (By similarity).</text>
</comment>
<organism>
    <name type="scientific">Azotobacter vinelandii</name>
    <dbReference type="NCBI Taxonomy" id="354"/>
    <lineage>
        <taxon>Bacteria</taxon>
        <taxon>Pseudomonadati</taxon>
        <taxon>Pseudomonadota</taxon>
        <taxon>Gammaproteobacteria</taxon>
        <taxon>Pseudomonadales</taxon>
        <taxon>Pseudomonadaceae</taxon>
        <taxon>Azotobacter</taxon>
    </lineage>
</organism>
<protein>
    <recommendedName>
        <fullName>Thiosulfate sulfurtransferase</fullName>
        <ecNumber>2.8.1.1</ecNumber>
    </recommendedName>
    <alternativeName>
        <fullName>Rhodanese-like protein</fullName>
    </alternativeName>
</protein>
<gene>
    <name type="primary">rhdA</name>
</gene>
<accession>P52197</accession>
<reference key="1">
    <citation type="journal article" date="1996" name="Eur. J. Biochem.">
        <title>Cloning, sequence analysis and overexpression of the rhodanese gene of Azotobacter vinelandii.</title>
        <authorList>
            <person name="Colnaghi R."/>
            <person name="Pagani S."/>
            <person name="Kennedy C."/>
            <person name="Drummond M."/>
        </authorList>
    </citation>
    <scope>NUCLEOTIDE SEQUENCE [GENOMIC DNA]</scope>
    <scope>PROTEIN SEQUENCE OF 1-18</scope>
    <source>
        <strain>OP / UW136</strain>
    </source>
</reference>
<reference key="2">
    <citation type="journal article" date="2000" name="J. Mol. Biol.">
        <title>The crystal structure of a sulfurtransferase from Azotobacter vinelandii highlights the evolutionary relationship between the rhodanese and phosphatase enzyme families.</title>
        <authorList>
            <person name="Bordo D."/>
            <person name="Deriu D."/>
            <person name="Colnaghi R."/>
            <person name="Carpen A."/>
            <person name="Pagani S."/>
            <person name="Bolognesi M."/>
        </authorList>
    </citation>
    <scope>X-RAY CRYSTALLOGRAPHY (1.8 ANGSTROMS)</scope>
</reference>
<reference key="3">
    <citation type="journal article" date="2001" name="Biol. Chem.">
        <title>A persulfurated cysteine promotes active site reactivity in Azotobacter vinelandii Rhodanese.</title>
        <authorList>
            <person name="Bordo D."/>
            <person name="Forlani F."/>
            <person name="Spallarossa A."/>
            <person name="Colnaghi R."/>
            <person name="Carpen A."/>
            <person name="Bolognesi M."/>
            <person name="Pagani S."/>
        </authorList>
    </citation>
    <scope>X-RAY CRYSTALLOGRAPHY (2.05 ANGSTROMS)</scope>
</reference>